<name>RL29_ALISL</name>
<comment type="similarity">
    <text evidence="1">Belongs to the universal ribosomal protein uL29 family.</text>
</comment>
<sequence length="63" mass="7287">MKAQDLREKNVEELNEELLNLLREQFNLRMQAATGQLQQTHTLKAVRRDIARVKTLLNEKAGA</sequence>
<reference key="1">
    <citation type="journal article" date="2008" name="BMC Genomics">
        <title>The genome sequence of the fish pathogen Aliivibrio salmonicida strain LFI1238 shows extensive evidence of gene decay.</title>
        <authorList>
            <person name="Hjerde E."/>
            <person name="Lorentzen M.S."/>
            <person name="Holden M.T."/>
            <person name="Seeger K."/>
            <person name="Paulsen S."/>
            <person name="Bason N."/>
            <person name="Churcher C."/>
            <person name="Harris D."/>
            <person name="Norbertczak H."/>
            <person name="Quail M.A."/>
            <person name="Sanders S."/>
            <person name="Thurston S."/>
            <person name="Parkhill J."/>
            <person name="Willassen N.P."/>
            <person name="Thomson N.R."/>
        </authorList>
    </citation>
    <scope>NUCLEOTIDE SEQUENCE [LARGE SCALE GENOMIC DNA]</scope>
    <source>
        <strain>LFI1238</strain>
    </source>
</reference>
<accession>B6EPT3</accession>
<keyword id="KW-0687">Ribonucleoprotein</keyword>
<keyword id="KW-0689">Ribosomal protein</keyword>
<gene>
    <name evidence="1" type="primary">rpmC</name>
    <name type="ordered locus">VSAL_I0328</name>
</gene>
<organism>
    <name type="scientific">Aliivibrio salmonicida (strain LFI1238)</name>
    <name type="common">Vibrio salmonicida (strain LFI1238)</name>
    <dbReference type="NCBI Taxonomy" id="316275"/>
    <lineage>
        <taxon>Bacteria</taxon>
        <taxon>Pseudomonadati</taxon>
        <taxon>Pseudomonadota</taxon>
        <taxon>Gammaproteobacteria</taxon>
        <taxon>Vibrionales</taxon>
        <taxon>Vibrionaceae</taxon>
        <taxon>Aliivibrio</taxon>
    </lineage>
</organism>
<proteinExistence type="inferred from homology"/>
<feature type="chain" id="PRO_1000121725" description="Large ribosomal subunit protein uL29">
    <location>
        <begin position="1"/>
        <end position="63"/>
    </location>
</feature>
<evidence type="ECO:0000255" key="1">
    <source>
        <dbReference type="HAMAP-Rule" id="MF_00374"/>
    </source>
</evidence>
<evidence type="ECO:0000305" key="2"/>
<dbReference type="EMBL" id="FM178379">
    <property type="protein sequence ID" value="CAQ78013.1"/>
    <property type="molecule type" value="Genomic_DNA"/>
</dbReference>
<dbReference type="RefSeq" id="WP_005417238.1">
    <property type="nucleotide sequence ID" value="NC_011312.1"/>
</dbReference>
<dbReference type="SMR" id="B6EPT3"/>
<dbReference type="GeneID" id="56276447"/>
<dbReference type="KEGG" id="vsa:VSAL_I0328"/>
<dbReference type="eggNOG" id="COG0255">
    <property type="taxonomic scope" value="Bacteria"/>
</dbReference>
<dbReference type="HOGENOM" id="CLU_158491_1_2_6"/>
<dbReference type="Proteomes" id="UP000001730">
    <property type="component" value="Chromosome 1"/>
</dbReference>
<dbReference type="GO" id="GO:0022625">
    <property type="term" value="C:cytosolic large ribosomal subunit"/>
    <property type="evidence" value="ECO:0007669"/>
    <property type="project" value="TreeGrafter"/>
</dbReference>
<dbReference type="GO" id="GO:0003735">
    <property type="term" value="F:structural constituent of ribosome"/>
    <property type="evidence" value="ECO:0007669"/>
    <property type="project" value="InterPro"/>
</dbReference>
<dbReference type="GO" id="GO:0006412">
    <property type="term" value="P:translation"/>
    <property type="evidence" value="ECO:0007669"/>
    <property type="project" value="UniProtKB-UniRule"/>
</dbReference>
<dbReference type="CDD" id="cd00427">
    <property type="entry name" value="Ribosomal_L29_HIP"/>
    <property type="match status" value="1"/>
</dbReference>
<dbReference type="Gene3D" id="6.10.140.1970">
    <property type="match status" value="1"/>
</dbReference>
<dbReference type="HAMAP" id="MF_00374">
    <property type="entry name" value="Ribosomal_uL29"/>
    <property type="match status" value="1"/>
</dbReference>
<dbReference type="InterPro" id="IPR050063">
    <property type="entry name" value="Ribosomal_protein_uL29"/>
</dbReference>
<dbReference type="InterPro" id="IPR001854">
    <property type="entry name" value="Ribosomal_uL29"/>
</dbReference>
<dbReference type="InterPro" id="IPR018254">
    <property type="entry name" value="Ribosomal_uL29_CS"/>
</dbReference>
<dbReference type="InterPro" id="IPR036049">
    <property type="entry name" value="Ribosomal_uL29_sf"/>
</dbReference>
<dbReference type="NCBIfam" id="TIGR00012">
    <property type="entry name" value="L29"/>
    <property type="match status" value="1"/>
</dbReference>
<dbReference type="PANTHER" id="PTHR10916">
    <property type="entry name" value="60S RIBOSOMAL PROTEIN L35/50S RIBOSOMAL PROTEIN L29"/>
    <property type="match status" value="1"/>
</dbReference>
<dbReference type="PANTHER" id="PTHR10916:SF0">
    <property type="entry name" value="LARGE RIBOSOMAL SUBUNIT PROTEIN UL29C"/>
    <property type="match status" value="1"/>
</dbReference>
<dbReference type="Pfam" id="PF00831">
    <property type="entry name" value="Ribosomal_L29"/>
    <property type="match status" value="1"/>
</dbReference>
<dbReference type="SUPFAM" id="SSF46561">
    <property type="entry name" value="Ribosomal protein L29 (L29p)"/>
    <property type="match status" value="1"/>
</dbReference>
<dbReference type="PROSITE" id="PS00579">
    <property type="entry name" value="RIBOSOMAL_L29"/>
    <property type="match status" value="1"/>
</dbReference>
<protein>
    <recommendedName>
        <fullName evidence="1">Large ribosomal subunit protein uL29</fullName>
    </recommendedName>
    <alternativeName>
        <fullName evidence="2">50S ribosomal protein L29</fullName>
    </alternativeName>
</protein>